<keyword id="KW-0963">Cytoplasm</keyword>
<keyword id="KW-0378">Hydrolase</keyword>
<keyword id="KW-0540">Nuclease</keyword>
<keyword id="KW-0690">Ribosome biogenesis</keyword>
<comment type="function">
    <text evidence="1">Could be a nuclease involved in processing of the 5'-end of pre-16S rRNA.</text>
</comment>
<comment type="subcellular location">
    <subcellularLocation>
        <location evidence="1">Cytoplasm</location>
    </subcellularLocation>
</comment>
<comment type="similarity">
    <text evidence="1">Belongs to the YqgF nuclease family.</text>
</comment>
<protein>
    <recommendedName>
        <fullName evidence="1">Putative pre-16S rRNA nuclease</fullName>
        <ecNumber evidence="1">3.1.-.-</ecNumber>
    </recommendedName>
</protein>
<reference key="1">
    <citation type="journal article" date="2007" name="PLoS Genet.">
        <title>Patterns and implications of gene gain and loss in the evolution of Prochlorococcus.</title>
        <authorList>
            <person name="Kettler G.C."/>
            <person name="Martiny A.C."/>
            <person name="Huang K."/>
            <person name="Zucker J."/>
            <person name="Coleman M.L."/>
            <person name="Rodrigue S."/>
            <person name="Chen F."/>
            <person name="Lapidus A."/>
            <person name="Ferriera S."/>
            <person name="Johnson J."/>
            <person name="Steglich C."/>
            <person name="Church G.M."/>
            <person name="Richardson P."/>
            <person name="Chisholm S.W."/>
        </authorList>
    </citation>
    <scope>NUCLEOTIDE SEQUENCE [LARGE SCALE GENOMIC DNA]</scope>
    <source>
        <strain>MIT 9215</strain>
    </source>
</reference>
<organism>
    <name type="scientific">Prochlorococcus marinus (strain MIT 9215)</name>
    <dbReference type="NCBI Taxonomy" id="93060"/>
    <lineage>
        <taxon>Bacteria</taxon>
        <taxon>Bacillati</taxon>
        <taxon>Cyanobacteriota</taxon>
        <taxon>Cyanophyceae</taxon>
        <taxon>Synechococcales</taxon>
        <taxon>Prochlorococcaceae</taxon>
        <taxon>Prochlorococcus</taxon>
    </lineage>
</organism>
<proteinExistence type="inferred from homology"/>
<dbReference type="EC" id="3.1.-.-" evidence="1"/>
<dbReference type="EMBL" id="CP000825">
    <property type="protein sequence ID" value="ABV50501.1"/>
    <property type="molecule type" value="Genomic_DNA"/>
</dbReference>
<dbReference type="RefSeq" id="WP_012007599.1">
    <property type="nucleotide sequence ID" value="NC_009840.1"/>
</dbReference>
<dbReference type="SMR" id="A8G4H0"/>
<dbReference type="STRING" id="93060.P9215_08861"/>
<dbReference type="KEGG" id="pmh:P9215_08861"/>
<dbReference type="eggNOG" id="COG0816">
    <property type="taxonomic scope" value="Bacteria"/>
</dbReference>
<dbReference type="HOGENOM" id="CLU_098240_3_1_3"/>
<dbReference type="OrthoDB" id="9796140at2"/>
<dbReference type="Proteomes" id="UP000002014">
    <property type="component" value="Chromosome"/>
</dbReference>
<dbReference type="GO" id="GO:0005829">
    <property type="term" value="C:cytosol"/>
    <property type="evidence" value="ECO:0007669"/>
    <property type="project" value="TreeGrafter"/>
</dbReference>
<dbReference type="GO" id="GO:0004518">
    <property type="term" value="F:nuclease activity"/>
    <property type="evidence" value="ECO:0007669"/>
    <property type="project" value="UniProtKB-KW"/>
</dbReference>
<dbReference type="GO" id="GO:0000967">
    <property type="term" value="P:rRNA 5'-end processing"/>
    <property type="evidence" value="ECO:0007669"/>
    <property type="project" value="UniProtKB-UniRule"/>
</dbReference>
<dbReference type="CDD" id="cd16964">
    <property type="entry name" value="YqgF"/>
    <property type="match status" value="1"/>
</dbReference>
<dbReference type="Gene3D" id="3.30.420.140">
    <property type="entry name" value="YqgF/RNase H-like domain"/>
    <property type="match status" value="1"/>
</dbReference>
<dbReference type="HAMAP" id="MF_00651">
    <property type="entry name" value="Nuclease_YqgF"/>
    <property type="match status" value="1"/>
</dbReference>
<dbReference type="InterPro" id="IPR012337">
    <property type="entry name" value="RNaseH-like_sf"/>
</dbReference>
<dbReference type="InterPro" id="IPR005227">
    <property type="entry name" value="YqgF"/>
</dbReference>
<dbReference type="InterPro" id="IPR006641">
    <property type="entry name" value="YqgF/RNaseH-like_dom"/>
</dbReference>
<dbReference type="InterPro" id="IPR037027">
    <property type="entry name" value="YqgF/RNaseH-like_dom_sf"/>
</dbReference>
<dbReference type="NCBIfam" id="TIGR00250">
    <property type="entry name" value="RNAse_H_YqgF"/>
    <property type="match status" value="1"/>
</dbReference>
<dbReference type="PANTHER" id="PTHR33317">
    <property type="entry name" value="POLYNUCLEOTIDYL TRANSFERASE, RIBONUCLEASE H-LIKE SUPERFAMILY PROTEIN"/>
    <property type="match status" value="1"/>
</dbReference>
<dbReference type="PANTHER" id="PTHR33317:SF4">
    <property type="entry name" value="POLYNUCLEOTIDYL TRANSFERASE, RIBONUCLEASE H-LIKE SUPERFAMILY PROTEIN"/>
    <property type="match status" value="1"/>
</dbReference>
<dbReference type="Pfam" id="PF03652">
    <property type="entry name" value="RuvX"/>
    <property type="match status" value="1"/>
</dbReference>
<dbReference type="SMART" id="SM00732">
    <property type="entry name" value="YqgFc"/>
    <property type="match status" value="1"/>
</dbReference>
<dbReference type="SUPFAM" id="SSF53098">
    <property type="entry name" value="Ribonuclease H-like"/>
    <property type="match status" value="1"/>
</dbReference>
<name>YQGF_PROM2</name>
<sequence>MKFCKPKPKSILSLDIGNKRIGLAYCDPLCITSNILPAVKRFKNNQEIKIIRNYINEYNLTGFIVGIPLDERGQMTTQAIDCKNYGQLLSYELRLPFSFVNEHSSTWESSNRFGIKKDKSGLIDSFSAKIILEQWIEEGPELEEIAGKPQIKY</sequence>
<feature type="chain" id="PRO_1000061552" description="Putative pre-16S rRNA nuclease">
    <location>
        <begin position="1"/>
        <end position="153"/>
    </location>
</feature>
<evidence type="ECO:0000255" key="1">
    <source>
        <dbReference type="HAMAP-Rule" id="MF_00651"/>
    </source>
</evidence>
<gene>
    <name type="ordered locus">P9215_08861</name>
</gene>
<accession>A8G4H0</accession>